<evidence type="ECO:0000250" key="1"/>
<evidence type="ECO:0000250" key="2">
    <source>
        <dbReference type="UniProtKB" id="Q9CAI7"/>
    </source>
</evidence>
<evidence type="ECO:0000255" key="3">
    <source>
        <dbReference type="PROSITE-ProRule" id="PRU00541"/>
    </source>
</evidence>
<evidence type="ECO:0000255" key="4">
    <source>
        <dbReference type="PROSITE-ProRule" id="PRU00542"/>
    </source>
</evidence>
<evidence type="ECO:0000269" key="5">
    <source>
    </source>
</evidence>
<evidence type="ECO:0000305" key="6"/>
<evidence type="ECO:0007744" key="7">
    <source>
    </source>
</evidence>
<feature type="initiator methionine" description="Removed" evidence="7">
    <location>
        <position position="1"/>
    </location>
</feature>
<feature type="chain" id="PRO_0000054950" description="Eukaryotic initiation factor 4A-2">
    <location>
        <begin position="2"/>
        <end position="412"/>
    </location>
</feature>
<feature type="domain" description="Helicase ATP-binding" evidence="3">
    <location>
        <begin position="70"/>
        <end position="240"/>
    </location>
</feature>
<feature type="domain" description="Helicase C-terminal" evidence="4">
    <location>
        <begin position="251"/>
        <end position="412"/>
    </location>
</feature>
<feature type="short sequence motif" description="Q motif">
    <location>
        <begin position="39"/>
        <end position="67"/>
    </location>
</feature>
<feature type="short sequence motif" description="DEAD box">
    <location>
        <begin position="188"/>
        <end position="191"/>
    </location>
</feature>
<feature type="binding site" evidence="3">
    <location>
        <begin position="83"/>
        <end position="90"/>
    </location>
    <ligand>
        <name>ATP</name>
        <dbReference type="ChEBI" id="CHEBI:30616"/>
    </ligand>
</feature>
<feature type="modified residue" description="N-acetylalanine" evidence="7">
    <location>
        <position position="2"/>
    </location>
</feature>
<feature type="modified residue" description="Phosphothreonine" evidence="2">
    <location>
        <position position="145"/>
    </location>
</feature>
<gene>
    <name type="primary">TIF4A-2</name>
    <name type="synonym">RH19</name>
    <name type="ordered locus">At1g54270</name>
    <name type="ORF">F20D21.9</name>
    <name type="ORF">F20D21_52</name>
</gene>
<reference key="1">
    <citation type="journal article" date="1992" name="Gene">
        <title>Sequences for two cDNAs encoding Arabidopsis thaliana eukaryotic protein synthesis initiation factor 4A.</title>
        <authorList>
            <person name="Metz A.M."/>
            <person name="Timmer R.T."/>
            <person name="Browning K.S."/>
        </authorList>
    </citation>
    <scope>NUCLEOTIDE SEQUENCE [MRNA]</scope>
</reference>
<reference key="2">
    <citation type="journal article" date="2000" name="Nature">
        <title>Sequence and analysis of chromosome 1 of the plant Arabidopsis thaliana.</title>
        <authorList>
            <person name="Theologis A."/>
            <person name="Ecker J.R."/>
            <person name="Palm C.J."/>
            <person name="Federspiel N.A."/>
            <person name="Kaul S."/>
            <person name="White O."/>
            <person name="Alonso J."/>
            <person name="Altafi H."/>
            <person name="Araujo R."/>
            <person name="Bowman C.L."/>
            <person name="Brooks S.Y."/>
            <person name="Buehler E."/>
            <person name="Chan A."/>
            <person name="Chao Q."/>
            <person name="Chen H."/>
            <person name="Cheuk R.F."/>
            <person name="Chin C.W."/>
            <person name="Chung M.K."/>
            <person name="Conn L."/>
            <person name="Conway A.B."/>
            <person name="Conway A.R."/>
            <person name="Creasy T.H."/>
            <person name="Dewar K."/>
            <person name="Dunn P."/>
            <person name="Etgu P."/>
            <person name="Feldblyum T.V."/>
            <person name="Feng J.-D."/>
            <person name="Fong B."/>
            <person name="Fujii C.Y."/>
            <person name="Gill J.E."/>
            <person name="Goldsmith A.D."/>
            <person name="Haas B."/>
            <person name="Hansen N.F."/>
            <person name="Hughes B."/>
            <person name="Huizar L."/>
            <person name="Hunter J.L."/>
            <person name="Jenkins J."/>
            <person name="Johnson-Hopson C."/>
            <person name="Khan S."/>
            <person name="Khaykin E."/>
            <person name="Kim C.J."/>
            <person name="Koo H.L."/>
            <person name="Kremenetskaia I."/>
            <person name="Kurtz D.B."/>
            <person name="Kwan A."/>
            <person name="Lam B."/>
            <person name="Langin-Hooper S."/>
            <person name="Lee A."/>
            <person name="Lee J.M."/>
            <person name="Lenz C.A."/>
            <person name="Li J.H."/>
            <person name="Li Y.-P."/>
            <person name="Lin X."/>
            <person name="Liu S.X."/>
            <person name="Liu Z.A."/>
            <person name="Luros J.S."/>
            <person name="Maiti R."/>
            <person name="Marziali A."/>
            <person name="Militscher J."/>
            <person name="Miranda M."/>
            <person name="Nguyen M."/>
            <person name="Nierman W.C."/>
            <person name="Osborne B.I."/>
            <person name="Pai G."/>
            <person name="Peterson J."/>
            <person name="Pham P.K."/>
            <person name="Rizzo M."/>
            <person name="Rooney T."/>
            <person name="Rowley D."/>
            <person name="Sakano H."/>
            <person name="Salzberg S.L."/>
            <person name="Schwartz J.R."/>
            <person name="Shinn P."/>
            <person name="Southwick A.M."/>
            <person name="Sun H."/>
            <person name="Tallon L.J."/>
            <person name="Tambunga G."/>
            <person name="Toriumi M.J."/>
            <person name="Town C.D."/>
            <person name="Utterback T."/>
            <person name="Van Aken S."/>
            <person name="Vaysberg M."/>
            <person name="Vysotskaia V.S."/>
            <person name="Walker M."/>
            <person name="Wu D."/>
            <person name="Yu G."/>
            <person name="Fraser C.M."/>
            <person name="Venter J.C."/>
            <person name="Davis R.W."/>
        </authorList>
    </citation>
    <scope>NUCLEOTIDE SEQUENCE [LARGE SCALE GENOMIC DNA]</scope>
    <source>
        <strain>cv. Columbia</strain>
    </source>
</reference>
<reference key="3">
    <citation type="journal article" date="2017" name="Plant J.">
        <title>Araport11: a complete reannotation of the Arabidopsis thaliana reference genome.</title>
        <authorList>
            <person name="Cheng C.Y."/>
            <person name="Krishnakumar V."/>
            <person name="Chan A.P."/>
            <person name="Thibaud-Nissen F."/>
            <person name="Schobel S."/>
            <person name="Town C.D."/>
        </authorList>
    </citation>
    <scope>GENOME REANNOTATION</scope>
    <source>
        <strain>cv. Columbia</strain>
    </source>
</reference>
<reference key="4">
    <citation type="journal article" date="2003" name="Science">
        <title>Empirical analysis of transcriptional activity in the Arabidopsis genome.</title>
        <authorList>
            <person name="Yamada K."/>
            <person name="Lim J."/>
            <person name="Dale J.M."/>
            <person name="Chen H."/>
            <person name="Shinn P."/>
            <person name="Palm C.J."/>
            <person name="Southwick A.M."/>
            <person name="Wu H.C."/>
            <person name="Kim C.J."/>
            <person name="Nguyen M."/>
            <person name="Pham P.K."/>
            <person name="Cheuk R.F."/>
            <person name="Karlin-Newmann G."/>
            <person name="Liu S.X."/>
            <person name="Lam B."/>
            <person name="Sakano H."/>
            <person name="Wu T."/>
            <person name="Yu G."/>
            <person name="Miranda M."/>
            <person name="Quach H.L."/>
            <person name="Tripp M."/>
            <person name="Chang C.H."/>
            <person name="Lee J.M."/>
            <person name="Toriumi M.J."/>
            <person name="Chan M.M."/>
            <person name="Tang C.C."/>
            <person name="Onodera C.S."/>
            <person name="Deng J.M."/>
            <person name="Akiyama K."/>
            <person name="Ansari Y."/>
            <person name="Arakawa T."/>
            <person name="Banh J."/>
            <person name="Banno F."/>
            <person name="Bowser L."/>
            <person name="Brooks S.Y."/>
            <person name="Carninci P."/>
            <person name="Chao Q."/>
            <person name="Choy N."/>
            <person name="Enju A."/>
            <person name="Goldsmith A.D."/>
            <person name="Gurjal M."/>
            <person name="Hansen N.F."/>
            <person name="Hayashizaki Y."/>
            <person name="Johnson-Hopson C."/>
            <person name="Hsuan V.W."/>
            <person name="Iida K."/>
            <person name="Karnes M."/>
            <person name="Khan S."/>
            <person name="Koesema E."/>
            <person name="Ishida J."/>
            <person name="Jiang P.X."/>
            <person name="Jones T."/>
            <person name="Kawai J."/>
            <person name="Kamiya A."/>
            <person name="Meyers C."/>
            <person name="Nakajima M."/>
            <person name="Narusaka M."/>
            <person name="Seki M."/>
            <person name="Sakurai T."/>
            <person name="Satou M."/>
            <person name="Tamse R."/>
            <person name="Vaysberg M."/>
            <person name="Wallender E.K."/>
            <person name="Wong C."/>
            <person name="Yamamura Y."/>
            <person name="Yuan S."/>
            <person name="Shinozaki K."/>
            <person name="Davis R.W."/>
            <person name="Theologis A."/>
            <person name="Ecker J.R."/>
        </authorList>
    </citation>
    <scope>NUCLEOTIDE SEQUENCE [LARGE SCALE MRNA]</scope>
    <source>
        <strain>cv. Columbia</strain>
    </source>
</reference>
<reference key="5">
    <citation type="submission" date="2006-07" db="EMBL/GenBank/DDBJ databases">
        <title>Large-scale analysis of RIKEN Arabidopsis full-length (RAFL) cDNAs.</title>
        <authorList>
            <person name="Totoki Y."/>
            <person name="Seki M."/>
            <person name="Ishida J."/>
            <person name="Nakajima M."/>
            <person name="Enju A."/>
            <person name="Kamiya A."/>
            <person name="Narusaka M."/>
            <person name="Shin-i T."/>
            <person name="Nakagawa M."/>
            <person name="Sakamoto N."/>
            <person name="Oishi K."/>
            <person name="Kohara Y."/>
            <person name="Kobayashi M."/>
            <person name="Toyoda A."/>
            <person name="Sakaki Y."/>
            <person name="Sakurai T."/>
            <person name="Iida K."/>
            <person name="Akiyama K."/>
            <person name="Satou M."/>
            <person name="Toyoda T."/>
            <person name="Konagaya A."/>
            <person name="Carninci P."/>
            <person name="Kawai J."/>
            <person name="Hayashizaki Y."/>
            <person name="Shinozaki K."/>
        </authorList>
    </citation>
    <scope>NUCLEOTIDE SEQUENCE [LARGE SCALE MRNA]</scope>
    <source>
        <strain>cv. Columbia</strain>
    </source>
</reference>
<reference key="6">
    <citation type="submission" date="2002-03" db="EMBL/GenBank/DDBJ databases">
        <title>Full-length cDNA from Arabidopsis thaliana.</title>
        <authorList>
            <person name="Brover V.V."/>
            <person name="Troukhan M.E."/>
            <person name="Alexandrov N.A."/>
            <person name="Lu Y.-P."/>
            <person name="Flavell R.B."/>
            <person name="Feldmann K.A."/>
        </authorList>
    </citation>
    <scope>NUCLEOTIDE SEQUENCE [LARGE SCALE MRNA]</scope>
</reference>
<reference key="7">
    <citation type="journal article" date="2004" name="Plant Biotechnol. J.">
        <title>DEAD-box RNA helicases in Arabidopsis thaliana: establishing a link between quantitative expression, gene structure and evolution of a family of genes.</title>
        <authorList>
            <person name="Mingam A."/>
            <person name="Toffano-Nioche C."/>
            <person name="Brunaud V."/>
            <person name="Boudet N."/>
            <person name="Kreis M."/>
            <person name="Lecharny A."/>
        </authorList>
    </citation>
    <scope>GENE FAMILY</scope>
    <scope>NOMENCLATURE</scope>
    <scope>TISSUE SPECIFICITY</scope>
</reference>
<reference key="8">
    <citation type="journal article" date="2012" name="Mol. Cell. Proteomics">
        <title>Comparative large-scale characterisation of plant vs. mammal proteins reveals similar and idiosyncratic N-alpha acetylation features.</title>
        <authorList>
            <person name="Bienvenut W.V."/>
            <person name="Sumpton D."/>
            <person name="Martinez A."/>
            <person name="Lilla S."/>
            <person name="Espagne C."/>
            <person name="Meinnel T."/>
            <person name="Giglione C."/>
        </authorList>
    </citation>
    <scope>ACETYLATION [LARGE SCALE ANALYSIS] AT ALA-2</scope>
    <scope>CLEAVAGE OF INITIATOR METHIONINE [LARGE SCALE ANALYSIS]</scope>
    <scope>IDENTIFICATION BY MASS SPECTROMETRY [LARGE SCALE ANALYSIS]</scope>
</reference>
<reference key="9">
    <citation type="journal article" date="2013" name="PLoS ONE">
        <title>Genome-wide comparative in silico analysis of the RNA helicase gene family in Zea mays and Glycine max: a comparison with Arabidopsis and Oryza sativa.</title>
        <authorList>
            <person name="Xu R."/>
            <person name="Zhang S."/>
            <person name="Huang J."/>
            <person name="Zheng C."/>
        </authorList>
    </citation>
    <scope>GENE FAMILY</scope>
</reference>
<accession>P41377</accession>
<accession>Q0WWK5</accession>
<sequence>MAGSAPEGTQFDTRQFDQRLNEVLDGQDEFFTSYDEVHESFDAMGLQENLLRGIYAYGFEKPSAIQQRGIVPFCKGLDVIQQAQSGTGKTATFCSGVLQQLDYALLQCQALVLAPTRELAQQIEKVMRALGDYQGVKVHACVGGTSVREDQRILQAGVHVVVGTPGRVFDMLRRQSLRPDCIKMFVLDEADEMLSRGFKDQIYDIFQLLPPKIQVGVFSATMPPEALEITRKFMSKPVRILVKRDELTLEGIKQFYVNVEKEDWKLETLCDLYETLAITQSVIFVNTRRKVDWLTDKMRSRDHTVSATHGDMDQNTRDIIMREFRSGSSRVLITTDLLARGIDVQQVSLVINFDLPTQPENYLHRIGRSGRFGRKGVAINFVTLDDQRMLFDIQKFYNVVVEELPSNVADLL</sequence>
<protein>
    <recommendedName>
        <fullName>Eukaryotic initiation factor 4A-2</fullName>
        <shortName>eIF-4A-2</shortName>
        <ecNumber>3.6.4.13</ecNumber>
    </recommendedName>
    <alternativeName>
        <fullName>ATP-dependent RNA helicase eIF4A-2</fullName>
    </alternativeName>
    <alternativeName>
        <fullName>DEAD-box ATP-dependent RNA helicase 19</fullName>
    </alternativeName>
</protein>
<proteinExistence type="evidence at protein level"/>
<organism>
    <name type="scientific">Arabidopsis thaliana</name>
    <name type="common">Mouse-ear cress</name>
    <dbReference type="NCBI Taxonomy" id="3702"/>
    <lineage>
        <taxon>Eukaryota</taxon>
        <taxon>Viridiplantae</taxon>
        <taxon>Streptophyta</taxon>
        <taxon>Embryophyta</taxon>
        <taxon>Tracheophyta</taxon>
        <taxon>Spermatophyta</taxon>
        <taxon>Magnoliopsida</taxon>
        <taxon>eudicotyledons</taxon>
        <taxon>Gunneridae</taxon>
        <taxon>Pentapetalae</taxon>
        <taxon>rosids</taxon>
        <taxon>malvids</taxon>
        <taxon>Brassicales</taxon>
        <taxon>Brassicaceae</taxon>
        <taxon>Camelineae</taxon>
        <taxon>Arabidopsis</taxon>
    </lineage>
</organism>
<keyword id="KW-0007">Acetylation</keyword>
<keyword id="KW-0025">Alternative splicing</keyword>
<keyword id="KW-0067">ATP-binding</keyword>
<keyword id="KW-0963">Cytoplasm</keyword>
<keyword id="KW-0347">Helicase</keyword>
<keyword id="KW-0378">Hydrolase</keyword>
<keyword id="KW-0396">Initiation factor</keyword>
<keyword id="KW-0547">Nucleotide-binding</keyword>
<keyword id="KW-0597">Phosphoprotein</keyword>
<keyword id="KW-0648">Protein biosynthesis</keyword>
<keyword id="KW-1185">Reference proteome</keyword>
<keyword id="KW-0694">RNA-binding</keyword>
<comment type="function">
    <text evidence="1">ATP-dependent RNA helicase which is a subunit of the eIF4F complex involved in cap recognition and is required for mRNA binding to ribosome. In the current model of translation initiation, eIF4A unwinds RNA secondary structures in the 5'-UTR of mRNAs which is necessary to allow efficient binding of the small ribosomal subunit, and subsequent scanning for the initiator codon (By similarity).</text>
</comment>
<comment type="catalytic activity">
    <reaction>
        <text>ATP + H2O = ADP + phosphate + H(+)</text>
        <dbReference type="Rhea" id="RHEA:13065"/>
        <dbReference type="ChEBI" id="CHEBI:15377"/>
        <dbReference type="ChEBI" id="CHEBI:15378"/>
        <dbReference type="ChEBI" id="CHEBI:30616"/>
        <dbReference type="ChEBI" id="CHEBI:43474"/>
        <dbReference type="ChEBI" id="CHEBI:456216"/>
        <dbReference type="EC" id="3.6.4.13"/>
    </reaction>
</comment>
<comment type="subunit">
    <text evidence="1">eIF4F is a multi-subunit complex, the composition of which varies with external and internal environmental conditions. It is composed of at least EIF4A, EIF4E and EIF4G (By similarity).</text>
</comment>
<comment type="subcellular location">
    <subcellularLocation>
        <location evidence="1">Cytoplasm</location>
    </subcellularLocation>
</comment>
<comment type="alternative products">
    <event type="alternative splicing"/>
    <isoform>
        <id>P41377-1</id>
        <name>1</name>
        <sequence type="displayed"/>
    </isoform>
    <text>A number of isoforms are produced. According to EST sequences.</text>
</comment>
<comment type="tissue specificity">
    <text evidence="5">Ubiquitous. Preferentially expressed in flowers, young leaves and roots.</text>
</comment>
<comment type="domain">
    <text>The Q motif is unique to and characteristic of the DEAD box family of RNA helicases and controls ATP binding and hydrolysis.</text>
</comment>
<comment type="similarity">
    <text evidence="6">Belongs to the DEAD box helicase family. eIF4A subfamily.</text>
</comment>
<dbReference type="EC" id="3.6.4.13"/>
<dbReference type="EMBL" id="X65053">
    <property type="protein sequence ID" value="CAA46189.1"/>
    <property type="molecule type" value="mRNA"/>
</dbReference>
<dbReference type="EMBL" id="AC005287">
    <property type="protein sequence ID" value="AAD25605.1"/>
    <property type="molecule type" value="Genomic_DNA"/>
</dbReference>
<dbReference type="EMBL" id="CP002684">
    <property type="protein sequence ID" value="AEE33073.1"/>
    <property type="molecule type" value="Genomic_DNA"/>
</dbReference>
<dbReference type="EMBL" id="AF386923">
    <property type="protein sequence ID" value="AAK62368.1"/>
    <property type="molecule type" value="mRNA"/>
</dbReference>
<dbReference type="EMBL" id="AF428462">
    <property type="protein sequence ID" value="AAL16231.1"/>
    <property type="molecule type" value="mRNA"/>
</dbReference>
<dbReference type="EMBL" id="BT008504">
    <property type="protein sequence ID" value="AAP37863.1"/>
    <property type="molecule type" value="mRNA"/>
</dbReference>
<dbReference type="EMBL" id="AK226344">
    <property type="protein sequence ID" value="BAE98493.1"/>
    <property type="molecule type" value="mRNA"/>
</dbReference>
<dbReference type="EMBL" id="AY087965">
    <property type="protein sequence ID" value="AAM65512.1"/>
    <property type="molecule type" value="mRNA"/>
</dbReference>
<dbReference type="PIR" id="JC1453">
    <property type="entry name" value="JC1453"/>
</dbReference>
<dbReference type="RefSeq" id="NP_175829.1">
    <molecule id="P41377-1"/>
    <property type="nucleotide sequence ID" value="NM_104305.4"/>
</dbReference>
<dbReference type="SMR" id="P41377"/>
<dbReference type="BioGRID" id="27093">
    <property type="interactions" value="9"/>
</dbReference>
<dbReference type="FunCoup" id="P41377">
    <property type="interactions" value="3894"/>
</dbReference>
<dbReference type="IntAct" id="P41377">
    <property type="interactions" value="1"/>
</dbReference>
<dbReference type="MINT" id="P41377"/>
<dbReference type="STRING" id="3702.P41377"/>
<dbReference type="iPTMnet" id="P41377"/>
<dbReference type="MetOSite" id="P41377"/>
<dbReference type="SwissPalm" id="P41377"/>
<dbReference type="PaxDb" id="3702-AT1G54270.1"/>
<dbReference type="EnsemblPlants" id="AT1G54270.1">
    <molecule id="P41377-1"/>
    <property type="protein sequence ID" value="AT1G54270.1"/>
    <property type="gene ID" value="AT1G54270"/>
</dbReference>
<dbReference type="GeneID" id="841868"/>
<dbReference type="Gramene" id="AT1G54270.1">
    <molecule id="P41377-1"/>
    <property type="protein sequence ID" value="AT1G54270.1"/>
    <property type="gene ID" value="AT1G54270"/>
</dbReference>
<dbReference type="KEGG" id="ath:AT1G54270"/>
<dbReference type="Araport" id="AT1G54270"/>
<dbReference type="TAIR" id="AT1G54270">
    <property type="gene designation" value="EIF4A-2"/>
</dbReference>
<dbReference type="eggNOG" id="KOG0327">
    <property type="taxonomic scope" value="Eukaryota"/>
</dbReference>
<dbReference type="HOGENOM" id="CLU_003041_1_0_1"/>
<dbReference type="InParanoid" id="P41377"/>
<dbReference type="OMA" id="ERISQYY"/>
<dbReference type="OrthoDB" id="1030590at2759"/>
<dbReference type="PhylomeDB" id="P41377"/>
<dbReference type="CD-CODE" id="4299E36E">
    <property type="entry name" value="Nucleolus"/>
</dbReference>
<dbReference type="PRO" id="PR:P41377"/>
<dbReference type="Proteomes" id="UP000006548">
    <property type="component" value="Chromosome 1"/>
</dbReference>
<dbReference type="ExpressionAtlas" id="P41377">
    <property type="expression patterns" value="baseline and differential"/>
</dbReference>
<dbReference type="GO" id="GO:0005829">
    <property type="term" value="C:cytosol"/>
    <property type="evidence" value="ECO:0007005"/>
    <property type="project" value="TAIR"/>
</dbReference>
<dbReference type="GO" id="GO:0005634">
    <property type="term" value="C:nucleus"/>
    <property type="evidence" value="ECO:0007005"/>
    <property type="project" value="TAIR"/>
</dbReference>
<dbReference type="GO" id="GO:0000325">
    <property type="term" value="C:plant-type vacuole"/>
    <property type="evidence" value="ECO:0007005"/>
    <property type="project" value="TAIR"/>
</dbReference>
<dbReference type="GO" id="GO:0005886">
    <property type="term" value="C:plasma membrane"/>
    <property type="evidence" value="ECO:0007005"/>
    <property type="project" value="TAIR"/>
</dbReference>
<dbReference type="GO" id="GO:0009506">
    <property type="term" value="C:plasmodesma"/>
    <property type="evidence" value="ECO:0007005"/>
    <property type="project" value="TAIR"/>
</dbReference>
<dbReference type="GO" id="GO:0005524">
    <property type="term" value="F:ATP binding"/>
    <property type="evidence" value="ECO:0007669"/>
    <property type="project" value="UniProtKB-KW"/>
</dbReference>
<dbReference type="GO" id="GO:0016887">
    <property type="term" value="F:ATP hydrolysis activity"/>
    <property type="evidence" value="ECO:0007669"/>
    <property type="project" value="RHEA"/>
</dbReference>
<dbReference type="GO" id="GO:0003729">
    <property type="term" value="F:mRNA binding"/>
    <property type="evidence" value="ECO:0000314"/>
    <property type="project" value="TAIR"/>
</dbReference>
<dbReference type="GO" id="GO:0003724">
    <property type="term" value="F:RNA helicase activity"/>
    <property type="evidence" value="ECO:0007669"/>
    <property type="project" value="UniProtKB-EC"/>
</dbReference>
<dbReference type="GO" id="GO:0003743">
    <property type="term" value="F:translation initiation factor activity"/>
    <property type="evidence" value="ECO:0007669"/>
    <property type="project" value="UniProtKB-KW"/>
</dbReference>
<dbReference type="CDD" id="cd17939">
    <property type="entry name" value="DEADc_EIF4A"/>
    <property type="match status" value="1"/>
</dbReference>
<dbReference type="CDD" id="cd18787">
    <property type="entry name" value="SF2_C_DEAD"/>
    <property type="match status" value="1"/>
</dbReference>
<dbReference type="FunFam" id="3.40.50.300:FF:000089">
    <property type="entry name" value="Eukaryotic initiation factor 4A-II"/>
    <property type="match status" value="1"/>
</dbReference>
<dbReference type="FunFam" id="3.40.50.300:FF:000031">
    <property type="entry name" value="Eukaryotic initiation factor 4A-III"/>
    <property type="match status" value="1"/>
</dbReference>
<dbReference type="Gene3D" id="3.40.50.300">
    <property type="entry name" value="P-loop containing nucleotide triphosphate hydrolases"/>
    <property type="match status" value="2"/>
</dbReference>
<dbReference type="InterPro" id="IPR011545">
    <property type="entry name" value="DEAD/DEAH_box_helicase_dom"/>
</dbReference>
<dbReference type="InterPro" id="IPR014001">
    <property type="entry name" value="Helicase_ATP-bd"/>
</dbReference>
<dbReference type="InterPro" id="IPR001650">
    <property type="entry name" value="Helicase_C-like"/>
</dbReference>
<dbReference type="InterPro" id="IPR027417">
    <property type="entry name" value="P-loop_NTPase"/>
</dbReference>
<dbReference type="InterPro" id="IPR000629">
    <property type="entry name" value="RNA-helicase_DEAD-box_CS"/>
</dbReference>
<dbReference type="InterPro" id="IPR014014">
    <property type="entry name" value="RNA_helicase_DEAD_Q_motif"/>
</dbReference>
<dbReference type="PANTHER" id="PTHR47958">
    <property type="entry name" value="ATP-DEPENDENT RNA HELICASE DBP3"/>
    <property type="match status" value="1"/>
</dbReference>
<dbReference type="Pfam" id="PF00270">
    <property type="entry name" value="DEAD"/>
    <property type="match status" value="1"/>
</dbReference>
<dbReference type="Pfam" id="PF00271">
    <property type="entry name" value="Helicase_C"/>
    <property type="match status" value="1"/>
</dbReference>
<dbReference type="SMART" id="SM00487">
    <property type="entry name" value="DEXDc"/>
    <property type="match status" value="1"/>
</dbReference>
<dbReference type="SMART" id="SM00490">
    <property type="entry name" value="HELICc"/>
    <property type="match status" value="1"/>
</dbReference>
<dbReference type="SUPFAM" id="SSF52540">
    <property type="entry name" value="P-loop containing nucleoside triphosphate hydrolases"/>
    <property type="match status" value="1"/>
</dbReference>
<dbReference type="PROSITE" id="PS00039">
    <property type="entry name" value="DEAD_ATP_HELICASE"/>
    <property type="match status" value="1"/>
</dbReference>
<dbReference type="PROSITE" id="PS51192">
    <property type="entry name" value="HELICASE_ATP_BIND_1"/>
    <property type="match status" value="1"/>
</dbReference>
<dbReference type="PROSITE" id="PS51194">
    <property type="entry name" value="HELICASE_CTER"/>
    <property type="match status" value="1"/>
</dbReference>
<dbReference type="PROSITE" id="PS51195">
    <property type="entry name" value="Q_MOTIF"/>
    <property type="match status" value="1"/>
</dbReference>
<name>IF4A2_ARATH</name>